<keyword id="KW-0687">Ribonucleoprotein</keyword>
<keyword id="KW-0689">Ribosomal protein</keyword>
<keyword id="KW-0694">RNA-binding</keyword>
<keyword id="KW-0699">rRNA-binding</keyword>
<gene>
    <name evidence="1" type="primary">rplO</name>
    <name type="ordered locus">CBUD_1835</name>
</gene>
<proteinExistence type="inferred from homology"/>
<comment type="function">
    <text evidence="1">Binds to the 23S rRNA.</text>
</comment>
<comment type="subunit">
    <text evidence="1">Part of the 50S ribosomal subunit.</text>
</comment>
<comment type="similarity">
    <text evidence="1">Belongs to the universal ribosomal protein uL15 family.</text>
</comment>
<sequence length="143" mass="15285">MQLNDLKPAKGARHQKLRVGRGIGSGKGKTAGRGHKGQHSRAGGYHKVGFEGGQMPLQRRVPKFGFTSRKELISAEVRLGELNKISGDVVDLASLKAANIISRQIKRVKIFAAGKLEKPVTIRGLRVTKGVKAAVEAAGGKIE</sequence>
<dbReference type="EMBL" id="CP000733">
    <property type="protein sequence ID" value="ABS77208.1"/>
    <property type="molecule type" value="Genomic_DNA"/>
</dbReference>
<dbReference type="RefSeq" id="WP_010957463.1">
    <property type="nucleotide sequence ID" value="NC_009727.1"/>
</dbReference>
<dbReference type="SMR" id="A9KD12"/>
<dbReference type="KEGG" id="cbd:CBUD_1835"/>
<dbReference type="HOGENOM" id="CLU_055188_4_2_6"/>
<dbReference type="Proteomes" id="UP000008555">
    <property type="component" value="Chromosome"/>
</dbReference>
<dbReference type="GO" id="GO:0022625">
    <property type="term" value="C:cytosolic large ribosomal subunit"/>
    <property type="evidence" value="ECO:0007669"/>
    <property type="project" value="TreeGrafter"/>
</dbReference>
<dbReference type="GO" id="GO:0019843">
    <property type="term" value="F:rRNA binding"/>
    <property type="evidence" value="ECO:0007669"/>
    <property type="project" value="UniProtKB-UniRule"/>
</dbReference>
<dbReference type="GO" id="GO:0003735">
    <property type="term" value="F:structural constituent of ribosome"/>
    <property type="evidence" value="ECO:0007669"/>
    <property type="project" value="InterPro"/>
</dbReference>
<dbReference type="GO" id="GO:0006412">
    <property type="term" value="P:translation"/>
    <property type="evidence" value="ECO:0007669"/>
    <property type="project" value="UniProtKB-UniRule"/>
</dbReference>
<dbReference type="Gene3D" id="3.100.10.10">
    <property type="match status" value="1"/>
</dbReference>
<dbReference type="HAMAP" id="MF_01341">
    <property type="entry name" value="Ribosomal_uL15"/>
    <property type="match status" value="1"/>
</dbReference>
<dbReference type="InterPro" id="IPR030878">
    <property type="entry name" value="Ribosomal_uL15"/>
</dbReference>
<dbReference type="InterPro" id="IPR021131">
    <property type="entry name" value="Ribosomal_uL15/eL18"/>
</dbReference>
<dbReference type="InterPro" id="IPR036227">
    <property type="entry name" value="Ribosomal_uL15/eL18_sf"/>
</dbReference>
<dbReference type="InterPro" id="IPR005749">
    <property type="entry name" value="Ribosomal_uL15_bac-type"/>
</dbReference>
<dbReference type="NCBIfam" id="TIGR01071">
    <property type="entry name" value="rplO_bact"/>
    <property type="match status" value="1"/>
</dbReference>
<dbReference type="PANTHER" id="PTHR12934">
    <property type="entry name" value="50S RIBOSOMAL PROTEIN L15"/>
    <property type="match status" value="1"/>
</dbReference>
<dbReference type="PANTHER" id="PTHR12934:SF11">
    <property type="entry name" value="LARGE RIBOSOMAL SUBUNIT PROTEIN UL15M"/>
    <property type="match status" value="1"/>
</dbReference>
<dbReference type="Pfam" id="PF00828">
    <property type="entry name" value="Ribosomal_L27A"/>
    <property type="match status" value="1"/>
</dbReference>
<dbReference type="SUPFAM" id="SSF52080">
    <property type="entry name" value="Ribosomal proteins L15p and L18e"/>
    <property type="match status" value="1"/>
</dbReference>
<protein>
    <recommendedName>
        <fullName evidence="1">Large ribosomal subunit protein uL15</fullName>
    </recommendedName>
    <alternativeName>
        <fullName evidence="3">50S ribosomal protein L15</fullName>
    </alternativeName>
</protein>
<accession>A9KD12</accession>
<feature type="chain" id="PRO_1000086708" description="Large ribosomal subunit protein uL15">
    <location>
        <begin position="1"/>
        <end position="143"/>
    </location>
</feature>
<feature type="region of interest" description="Disordered" evidence="2">
    <location>
        <begin position="20"/>
        <end position="52"/>
    </location>
</feature>
<feature type="compositionally biased region" description="Basic residues" evidence="2">
    <location>
        <begin position="30"/>
        <end position="39"/>
    </location>
</feature>
<organism>
    <name type="scientific">Coxiella burnetii (strain Dugway 5J108-111)</name>
    <dbReference type="NCBI Taxonomy" id="434922"/>
    <lineage>
        <taxon>Bacteria</taxon>
        <taxon>Pseudomonadati</taxon>
        <taxon>Pseudomonadota</taxon>
        <taxon>Gammaproteobacteria</taxon>
        <taxon>Legionellales</taxon>
        <taxon>Coxiellaceae</taxon>
        <taxon>Coxiella</taxon>
    </lineage>
</organism>
<reference key="1">
    <citation type="journal article" date="2009" name="Infect. Immun.">
        <title>Comparative genomics reveal extensive transposon-mediated genomic plasticity and diversity among potential effector proteins within the genus Coxiella.</title>
        <authorList>
            <person name="Beare P.A."/>
            <person name="Unsworth N."/>
            <person name="Andoh M."/>
            <person name="Voth D.E."/>
            <person name="Omsland A."/>
            <person name="Gilk S.D."/>
            <person name="Williams K.P."/>
            <person name="Sobral B.W."/>
            <person name="Kupko J.J. III"/>
            <person name="Porcella S.F."/>
            <person name="Samuel J.E."/>
            <person name="Heinzen R.A."/>
        </authorList>
    </citation>
    <scope>NUCLEOTIDE SEQUENCE [LARGE SCALE GENOMIC DNA]</scope>
    <source>
        <strain>Dugway 5J108-111</strain>
    </source>
</reference>
<name>RL15_COXBN</name>
<evidence type="ECO:0000255" key="1">
    <source>
        <dbReference type="HAMAP-Rule" id="MF_01341"/>
    </source>
</evidence>
<evidence type="ECO:0000256" key="2">
    <source>
        <dbReference type="SAM" id="MobiDB-lite"/>
    </source>
</evidence>
<evidence type="ECO:0000305" key="3"/>